<proteinExistence type="inferred from homology"/>
<dbReference type="EC" id="2.7.7.61" evidence="1"/>
<dbReference type="EMBL" id="CP001396">
    <property type="protein sequence ID" value="ACR61998.1"/>
    <property type="molecule type" value="Genomic_DNA"/>
</dbReference>
<dbReference type="RefSeq" id="WP_000550422.1">
    <property type="nucleotide sequence ID" value="NC_012759.1"/>
</dbReference>
<dbReference type="SMR" id="C4ZWA3"/>
<dbReference type="GeneID" id="93776871"/>
<dbReference type="KEGG" id="ebw:BWG_0487"/>
<dbReference type="HOGENOM" id="CLU_104529_1_1_6"/>
<dbReference type="GO" id="GO:0050519">
    <property type="term" value="F:holo-citrate lyase synthase activity"/>
    <property type="evidence" value="ECO:0007669"/>
    <property type="project" value="UniProtKB-UniRule"/>
</dbReference>
<dbReference type="GO" id="GO:0051191">
    <property type="term" value="P:prosthetic group biosynthetic process"/>
    <property type="evidence" value="ECO:0007669"/>
    <property type="project" value="InterPro"/>
</dbReference>
<dbReference type="HAMAP" id="MF_00398">
    <property type="entry name" value="CitX"/>
    <property type="match status" value="1"/>
</dbReference>
<dbReference type="InterPro" id="IPR005551">
    <property type="entry name" value="CitX"/>
</dbReference>
<dbReference type="NCBIfam" id="TIGR03124">
    <property type="entry name" value="citrate_citX"/>
    <property type="match status" value="1"/>
</dbReference>
<dbReference type="NCBIfam" id="NF002383">
    <property type="entry name" value="PRK01392.1"/>
    <property type="match status" value="1"/>
</dbReference>
<dbReference type="Pfam" id="PF03802">
    <property type="entry name" value="CitX"/>
    <property type="match status" value="1"/>
</dbReference>
<feature type="chain" id="PRO_1000205876" description="Probable apo-citrate lyase phosphoribosyl-dephospho-CoA transferase">
    <location>
        <begin position="1"/>
        <end position="183"/>
    </location>
</feature>
<gene>
    <name evidence="1" type="primary">citX</name>
    <name type="ordered locus">BWG_0487</name>
</gene>
<sequence>MHLLPELASHHAVSIPELLVSRDERQARQHVWLKRHPVPLVSFTVVAPGPIKDSEVTRRIFNHGVTALRALAAKQGWQIQEQAALVSASGPEGMLSIAAPARDLKLATIELEHSHPLGRLWDIDVLTPEGEILSRRDYSLPPRRCLLCEQSAAVCARGKTHQLTDLLNRMEALLNDVDACNVN</sequence>
<name>CITX_ECOBW</name>
<comment type="function">
    <text evidence="1">Transfers 2-(5''-triphosphoribosyl)-3'-dephosphocoenzyme-A on a serine residue to the apo-acyl carrier protein (gamma chain) of the citrate lyase to yield holo-acyl carrier protein.</text>
</comment>
<comment type="catalytic activity">
    <reaction evidence="1">
        <text>apo-[citrate lyase ACP] + 2'-(5''-triphospho-alpha-D-ribosyl)-3'-dephospho-CoA = holo-[citrate lyase ACP] + diphosphate</text>
        <dbReference type="Rhea" id="RHEA:16333"/>
        <dbReference type="Rhea" id="RHEA-COMP:10157"/>
        <dbReference type="Rhea" id="RHEA-COMP:10158"/>
        <dbReference type="ChEBI" id="CHEBI:29999"/>
        <dbReference type="ChEBI" id="CHEBI:33019"/>
        <dbReference type="ChEBI" id="CHEBI:61378"/>
        <dbReference type="ChEBI" id="CHEBI:82683"/>
        <dbReference type="EC" id="2.7.7.61"/>
    </reaction>
</comment>
<comment type="similarity">
    <text evidence="1">Belongs to the CitX family.</text>
</comment>
<reference key="1">
    <citation type="journal article" date="2009" name="J. Bacteriol.">
        <title>Genomic sequencing reveals regulatory mutations and recombinational events in the widely used MC4100 lineage of Escherichia coli K-12.</title>
        <authorList>
            <person name="Ferenci T."/>
            <person name="Zhou Z."/>
            <person name="Betteridge T."/>
            <person name="Ren Y."/>
            <person name="Liu Y."/>
            <person name="Feng L."/>
            <person name="Reeves P.R."/>
            <person name="Wang L."/>
        </authorList>
    </citation>
    <scope>NUCLEOTIDE SEQUENCE [LARGE SCALE GENOMIC DNA]</scope>
    <source>
        <strain>K12 / MC4100 / BW2952</strain>
    </source>
</reference>
<protein>
    <recommendedName>
        <fullName evidence="1">Probable apo-citrate lyase phosphoribosyl-dephospho-CoA transferase</fullName>
        <ecNumber evidence="1">2.7.7.61</ecNumber>
    </recommendedName>
    <alternativeName>
        <fullName evidence="1">Apo-ACP nucleodityltransferase</fullName>
    </alternativeName>
    <alternativeName>
        <fullName evidence="1">Holo-ACP synthase</fullName>
    </alternativeName>
    <alternativeName>
        <fullName evidence="1">Holo-citrate lyase synthase</fullName>
    </alternativeName>
</protein>
<organism>
    <name type="scientific">Escherichia coli (strain K12 / MC4100 / BW2952)</name>
    <dbReference type="NCBI Taxonomy" id="595496"/>
    <lineage>
        <taxon>Bacteria</taxon>
        <taxon>Pseudomonadati</taxon>
        <taxon>Pseudomonadota</taxon>
        <taxon>Gammaproteobacteria</taxon>
        <taxon>Enterobacterales</taxon>
        <taxon>Enterobacteriaceae</taxon>
        <taxon>Escherichia</taxon>
    </lineage>
</organism>
<evidence type="ECO:0000255" key="1">
    <source>
        <dbReference type="HAMAP-Rule" id="MF_00398"/>
    </source>
</evidence>
<keyword id="KW-0548">Nucleotidyltransferase</keyword>
<keyword id="KW-0808">Transferase</keyword>
<accession>C4ZWA3</accession>